<proteinExistence type="inferred from homology"/>
<accession>Q3KJ68</accession>
<protein>
    <recommendedName>
        <fullName evidence="1">Protein nucleotidyltransferase YdiU</fullName>
        <ecNumber evidence="1">2.7.7.-</ecNumber>
    </recommendedName>
    <alternativeName>
        <fullName evidence="1">Protein adenylyltransferase YdiU</fullName>
        <ecNumber evidence="1">2.7.7.108</ecNumber>
    </alternativeName>
    <alternativeName>
        <fullName evidence="1">Protein uridylyltransferase YdiU</fullName>
        <ecNumber evidence="1">2.7.7.-</ecNumber>
    </alternativeName>
</protein>
<reference key="1">
    <citation type="journal article" date="2009" name="Genome Biol.">
        <title>Genomic and genetic analyses of diversity and plant interactions of Pseudomonas fluorescens.</title>
        <authorList>
            <person name="Silby M.W."/>
            <person name="Cerdeno-Tarraga A.M."/>
            <person name="Vernikos G.S."/>
            <person name="Giddens S.R."/>
            <person name="Jackson R.W."/>
            <person name="Preston G.M."/>
            <person name="Zhang X.-X."/>
            <person name="Moon C.D."/>
            <person name="Gehrig S.M."/>
            <person name="Godfrey S.A.C."/>
            <person name="Knight C.G."/>
            <person name="Malone J.G."/>
            <person name="Robinson Z."/>
            <person name="Spiers A.J."/>
            <person name="Harris S."/>
            <person name="Challis G.L."/>
            <person name="Yaxley A.M."/>
            <person name="Harris D."/>
            <person name="Seeger K."/>
            <person name="Murphy L."/>
            <person name="Rutter S."/>
            <person name="Squares R."/>
            <person name="Quail M.A."/>
            <person name="Saunders E."/>
            <person name="Mavromatis K."/>
            <person name="Brettin T.S."/>
            <person name="Bentley S.D."/>
            <person name="Hothersall J."/>
            <person name="Stephens E."/>
            <person name="Thomas C.M."/>
            <person name="Parkhill J."/>
            <person name="Levy S.B."/>
            <person name="Rainey P.B."/>
            <person name="Thomson N.R."/>
        </authorList>
    </citation>
    <scope>NUCLEOTIDE SEQUENCE [LARGE SCALE GENOMIC DNA]</scope>
    <source>
        <strain>Pf0-1</strain>
    </source>
</reference>
<comment type="function">
    <text evidence="1">Nucleotidyltransferase involved in the post-translational modification of proteins. It can catalyze the addition of adenosine monophosphate (AMP) or uridine monophosphate (UMP) to a protein, resulting in modifications known as AMPylation and UMPylation.</text>
</comment>
<comment type="catalytic activity">
    <reaction evidence="1">
        <text>L-seryl-[protein] + ATP = 3-O-(5'-adenylyl)-L-seryl-[protein] + diphosphate</text>
        <dbReference type="Rhea" id="RHEA:58120"/>
        <dbReference type="Rhea" id="RHEA-COMP:9863"/>
        <dbReference type="Rhea" id="RHEA-COMP:15073"/>
        <dbReference type="ChEBI" id="CHEBI:29999"/>
        <dbReference type="ChEBI" id="CHEBI:30616"/>
        <dbReference type="ChEBI" id="CHEBI:33019"/>
        <dbReference type="ChEBI" id="CHEBI:142516"/>
        <dbReference type="EC" id="2.7.7.108"/>
    </reaction>
</comment>
<comment type="catalytic activity">
    <reaction evidence="1">
        <text>L-threonyl-[protein] + ATP = 3-O-(5'-adenylyl)-L-threonyl-[protein] + diphosphate</text>
        <dbReference type="Rhea" id="RHEA:54292"/>
        <dbReference type="Rhea" id="RHEA-COMP:11060"/>
        <dbReference type="Rhea" id="RHEA-COMP:13847"/>
        <dbReference type="ChEBI" id="CHEBI:30013"/>
        <dbReference type="ChEBI" id="CHEBI:30616"/>
        <dbReference type="ChEBI" id="CHEBI:33019"/>
        <dbReference type="ChEBI" id="CHEBI:138113"/>
        <dbReference type="EC" id="2.7.7.108"/>
    </reaction>
</comment>
<comment type="catalytic activity">
    <reaction evidence="1">
        <text>L-tyrosyl-[protein] + ATP = O-(5'-adenylyl)-L-tyrosyl-[protein] + diphosphate</text>
        <dbReference type="Rhea" id="RHEA:54288"/>
        <dbReference type="Rhea" id="RHEA-COMP:10136"/>
        <dbReference type="Rhea" id="RHEA-COMP:13846"/>
        <dbReference type="ChEBI" id="CHEBI:30616"/>
        <dbReference type="ChEBI" id="CHEBI:33019"/>
        <dbReference type="ChEBI" id="CHEBI:46858"/>
        <dbReference type="ChEBI" id="CHEBI:83624"/>
        <dbReference type="EC" id="2.7.7.108"/>
    </reaction>
</comment>
<comment type="catalytic activity">
    <reaction evidence="1">
        <text>L-histidyl-[protein] + UTP = N(tele)-(5'-uridylyl)-L-histidyl-[protein] + diphosphate</text>
        <dbReference type="Rhea" id="RHEA:83891"/>
        <dbReference type="Rhea" id="RHEA-COMP:9745"/>
        <dbReference type="Rhea" id="RHEA-COMP:20239"/>
        <dbReference type="ChEBI" id="CHEBI:29979"/>
        <dbReference type="ChEBI" id="CHEBI:33019"/>
        <dbReference type="ChEBI" id="CHEBI:46398"/>
        <dbReference type="ChEBI" id="CHEBI:233474"/>
    </reaction>
</comment>
<comment type="catalytic activity">
    <reaction evidence="1">
        <text>L-seryl-[protein] + UTP = O-(5'-uridylyl)-L-seryl-[protein] + diphosphate</text>
        <dbReference type="Rhea" id="RHEA:64604"/>
        <dbReference type="Rhea" id="RHEA-COMP:9863"/>
        <dbReference type="Rhea" id="RHEA-COMP:16635"/>
        <dbReference type="ChEBI" id="CHEBI:29999"/>
        <dbReference type="ChEBI" id="CHEBI:33019"/>
        <dbReference type="ChEBI" id="CHEBI:46398"/>
        <dbReference type="ChEBI" id="CHEBI:156051"/>
    </reaction>
</comment>
<comment type="catalytic activity">
    <reaction evidence="1">
        <text>L-tyrosyl-[protein] + UTP = O-(5'-uridylyl)-L-tyrosyl-[protein] + diphosphate</text>
        <dbReference type="Rhea" id="RHEA:83887"/>
        <dbReference type="Rhea" id="RHEA-COMP:10136"/>
        <dbReference type="Rhea" id="RHEA-COMP:20238"/>
        <dbReference type="ChEBI" id="CHEBI:33019"/>
        <dbReference type="ChEBI" id="CHEBI:46398"/>
        <dbReference type="ChEBI" id="CHEBI:46858"/>
        <dbReference type="ChEBI" id="CHEBI:90602"/>
    </reaction>
</comment>
<comment type="cofactor">
    <cofactor evidence="1">
        <name>Mg(2+)</name>
        <dbReference type="ChEBI" id="CHEBI:18420"/>
    </cofactor>
    <cofactor evidence="1">
        <name>Mn(2+)</name>
        <dbReference type="ChEBI" id="CHEBI:29035"/>
    </cofactor>
</comment>
<comment type="similarity">
    <text evidence="1">Belongs to the SELO family.</text>
</comment>
<name>SELO_PSEPF</name>
<dbReference type="EC" id="2.7.7.-" evidence="1"/>
<dbReference type="EC" id="2.7.7.108" evidence="1"/>
<dbReference type="EMBL" id="CP000094">
    <property type="protein sequence ID" value="ABA72188.1"/>
    <property type="molecule type" value="Genomic_DNA"/>
</dbReference>
<dbReference type="RefSeq" id="WP_011332110.1">
    <property type="nucleotide sequence ID" value="NC_007492.2"/>
</dbReference>
<dbReference type="SMR" id="Q3KJ68"/>
<dbReference type="KEGG" id="pfo:Pfl01_0444"/>
<dbReference type="eggNOG" id="COG0397">
    <property type="taxonomic scope" value="Bacteria"/>
</dbReference>
<dbReference type="HOGENOM" id="CLU_010245_4_0_6"/>
<dbReference type="Proteomes" id="UP000002704">
    <property type="component" value="Chromosome"/>
</dbReference>
<dbReference type="GO" id="GO:0070733">
    <property type="term" value="F:AMPylase activity"/>
    <property type="evidence" value="ECO:0007669"/>
    <property type="project" value="RHEA"/>
</dbReference>
<dbReference type="GO" id="GO:0005524">
    <property type="term" value="F:ATP binding"/>
    <property type="evidence" value="ECO:0007669"/>
    <property type="project" value="UniProtKB-UniRule"/>
</dbReference>
<dbReference type="GO" id="GO:0000287">
    <property type="term" value="F:magnesium ion binding"/>
    <property type="evidence" value="ECO:0007669"/>
    <property type="project" value="UniProtKB-UniRule"/>
</dbReference>
<dbReference type="HAMAP" id="MF_00692">
    <property type="entry name" value="YdiU_SelO"/>
    <property type="match status" value="1"/>
</dbReference>
<dbReference type="InterPro" id="IPR003846">
    <property type="entry name" value="SelO"/>
</dbReference>
<dbReference type="NCBIfam" id="NF000658">
    <property type="entry name" value="PRK00029.1"/>
    <property type="match status" value="1"/>
</dbReference>
<dbReference type="NCBIfam" id="NF045949">
    <property type="entry name" value="PrtAdtaseSelOPseudom"/>
    <property type="match status" value="1"/>
</dbReference>
<dbReference type="PANTHER" id="PTHR32057">
    <property type="entry name" value="PROTEIN ADENYLYLTRANSFERASE SELO, MITOCHONDRIAL"/>
    <property type="match status" value="1"/>
</dbReference>
<dbReference type="PANTHER" id="PTHR32057:SF14">
    <property type="entry name" value="PROTEIN ADENYLYLTRANSFERASE SELO, MITOCHONDRIAL"/>
    <property type="match status" value="1"/>
</dbReference>
<dbReference type="Pfam" id="PF02696">
    <property type="entry name" value="SelO"/>
    <property type="match status" value="1"/>
</dbReference>
<sequence>MKALDELTFDNRFARLGDAFSAHVLPEPIDNPRLVVASPAALALLDLDPAMADTQEFAELFGGHKLWADAEPRAMVYSGHQFGGYTPQLGDGRGLLLGEVYNAAGEHWDLHLKGAGQTPFSRMGDGRAVLRSSIREFLASEALHALNIPSSRAACVIGSDTPVWREKQERAAMVLRLAPSHIRFGHFEYFYYTKRPEQQKLLGEHVLAMHYPECLEQPEPYLAMFREIVERNAELIAKWQAYGFCHGVMNTDNMSILGITFDFGPFAFLDDFDANFICNHSDDQGRYSFSNQVPVGQWNLSTLAQALTPLISVEALRETLGLYLPLFQAHYLDLMRRRLGFTTAEDDDQMLLEQLLQLMQNSGVDYTLFFRRLGEESAEQAVARLRDDFVDIKGFDAWGERYVARVARDGATDQEQRRARMHAVNPLYILRNYLAQKAIDAAEQGDYSEVRRLHAVLSNPFEEQPGMESYAERPPEWGKHLEISCSS</sequence>
<feature type="chain" id="PRO_0000271847" description="Protein nucleotidyltransferase YdiU">
    <location>
        <begin position="1"/>
        <end position="487"/>
    </location>
</feature>
<feature type="active site" description="Proton acceptor" evidence="1">
    <location>
        <position position="252"/>
    </location>
</feature>
<feature type="binding site" evidence="1">
    <location>
        <position position="90"/>
    </location>
    <ligand>
        <name>ATP</name>
        <dbReference type="ChEBI" id="CHEBI:30616"/>
    </ligand>
</feature>
<feature type="binding site" evidence="1">
    <location>
        <position position="92"/>
    </location>
    <ligand>
        <name>ATP</name>
        <dbReference type="ChEBI" id="CHEBI:30616"/>
    </ligand>
</feature>
<feature type="binding site" evidence="1">
    <location>
        <position position="93"/>
    </location>
    <ligand>
        <name>ATP</name>
        <dbReference type="ChEBI" id="CHEBI:30616"/>
    </ligand>
</feature>
<feature type="binding site" evidence="1">
    <location>
        <position position="113"/>
    </location>
    <ligand>
        <name>ATP</name>
        <dbReference type="ChEBI" id="CHEBI:30616"/>
    </ligand>
</feature>
<feature type="binding site" evidence="1">
    <location>
        <position position="125"/>
    </location>
    <ligand>
        <name>ATP</name>
        <dbReference type="ChEBI" id="CHEBI:30616"/>
    </ligand>
</feature>
<feature type="binding site" evidence="1">
    <location>
        <position position="126"/>
    </location>
    <ligand>
        <name>ATP</name>
        <dbReference type="ChEBI" id="CHEBI:30616"/>
    </ligand>
</feature>
<feature type="binding site" evidence="1">
    <location>
        <position position="176"/>
    </location>
    <ligand>
        <name>ATP</name>
        <dbReference type="ChEBI" id="CHEBI:30616"/>
    </ligand>
</feature>
<feature type="binding site" evidence="1">
    <location>
        <position position="183"/>
    </location>
    <ligand>
        <name>ATP</name>
        <dbReference type="ChEBI" id="CHEBI:30616"/>
    </ligand>
</feature>
<feature type="binding site" evidence="1">
    <location>
        <position position="253"/>
    </location>
    <ligand>
        <name>Mg(2+)</name>
        <dbReference type="ChEBI" id="CHEBI:18420"/>
    </ligand>
</feature>
<feature type="binding site" evidence="1">
    <location>
        <position position="262"/>
    </location>
    <ligand>
        <name>ATP</name>
        <dbReference type="ChEBI" id="CHEBI:30616"/>
    </ligand>
</feature>
<feature type="binding site" evidence="1">
    <location>
        <position position="262"/>
    </location>
    <ligand>
        <name>Mg(2+)</name>
        <dbReference type="ChEBI" id="CHEBI:18420"/>
    </ligand>
</feature>
<evidence type="ECO:0000255" key="1">
    <source>
        <dbReference type="HAMAP-Rule" id="MF_00692"/>
    </source>
</evidence>
<gene>
    <name evidence="1" type="primary">ydiU</name>
    <name evidence="1" type="synonym">selO</name>
    <name type="ordered locus">Pfl01_0444</name>
</gene>
<organism>
    <name type="scientific">Pseudomonas fluorescens (strain Pf0-1)</name>
    <dbReference type="NCBI Taxonomy" id="205922"/>
    <lineage>
        <taxon>Bacteria</taxon>
        <taxon>Pseudomonadati</taxon>
        <taxon>Pseudomonadota</taxon>
        <taxon>Gammaproteobacteria</taxon>
        <taxon>Pseudomonadales</taxon>
        <taxon>Pseudomonadaceae</taxon>
        <taxon>Pseudomonas</taxon>
    </lineage>
</organism>
<keyword id="KW-0067">ATP-binding</keyword>
<keyword id="KW-0460">Magnesium</keyword>
<keyword id="KW-0464">Manganese</keyword>
<keyword id="KW-0479">Metal-binding</keyword>
<keyword id="KW-0547">Nucleotide-binding</keyword>
<keyword id="KW-0548">Nucleotidyltransferase</keyword>
<keyword id="KW-0808">Transferase</keyword>